<keyword id="KW-1015">Disulfide bond</keyword>
<keyword id="KW-0325">Glycoprotein</keyword>
<keyword id="KW-0333">Golgi apparatus</keyword>
<keyword id="KW-0472">Membrane</keyword>
<keyword id="KW-0611">Plant defense</keyword>
<keyword id="KW-1185">Reference proteome</keyword>
<keyword id="KW-0735">Signal-anchor</keyword>
<keyword id="KW-0808">Transferase</keyword>
<keyword id="KW-0812">Transmembrane</keyword>
<keyword id="KW-1133">Transmembrane helix</keyword>
<dbReference type="EC" id="2.3.1.-" evidence="6"/>
<dbReference type="EMBL" id="MH037026">
    <property type="protein sequence ID" value="AVR54516.1"/>
    <property type="molecule type" value="mRNA"/>
</dbReference>
<dbReference type="EMBL" id="DP000010">
    <property type="protein sequence ID" value="ABA91093.1"/>
    <property type="molecule type" value="Genomic_DNA"/>
</dbReference>
<dbReference type="EMBL" id="AP008217">
    <property type="protein sequence ID" value="BAF27388.1"/>
    <property type="molecule type" value="Genomic_DNA"/>
</dbReference>
<dbReference type="EMBL" id="AP014967">
    <property type="protein sequence ID" value="BAT12325.1"/>
    <property type="molecule type" value="Genomic_DNA"/>
</dbReference>
<dbReference type="EMBL" id="CM000148">
    <property type="protein sequence ID" value="EEE51501.1"/>
    <property type="molecule type" value="Genomic_DNA"/>
</dbReference>
<dbReference type="EMBL" id="AK065582">
    <property type="protein sequence ID" value="BAG89570.1"/>
    <property type="molecule type" value="mRNA"/>
</dbReference>
<dbReference type="SMR" id="Q2RBL8"/>
<dbReference type="FunCoup" id="Q2RBL8">
    <property type="interactions" value="1"/>
</dbReference>
<dbReference type="GlyCosmos" id="Q2RBL8">
    <property type="glycosylation" value="9 sites, No reported glycans"/>
</dbReference>
<dbReference type="PaxDb" id="39947-Q2RBL8"/>
<dbReference type="EnsemblPlants" id="Os11t0107000-01">
    <property type="protein sequence ID" value="Os11t0107000-01"/>
    <property type="gene ID" value="Os11g0107000"/>
</dbReference>
<dbReference type="GeneID" id="4349561"/>
<dbReference type="Gramene" id="Os11t0107000-01">
    <property type="protein sequence ID" value="Os11t0107000-01"/>
    <property type="gene ID" value="Os11g0107000"/>
</dbReference>
<dbReference type="KEGG" id="dosa:Os11g0107000"/>
<dbReference type="KEGG" id="osa:4349561"/>
<dbReference type="eggNOG" id="ENOG502SHUB">
    <property type="taxonomic scope" value="Eukaryota"/>
</dbReference>
<dbReference type="HOGENOM" id="CLU_020953_3_1_1"/>
<dbReference type="InParanoid" id="Q2RBL8"/>
<dbReference type="OMA" id="TEATPKM"/>
<dbReference type="OrthoDB" id="585788at2759"/>
<dbReference type="Proteomes" id="UP000000763">
    <property type="component" value="Chromosome 11"/>
</dbReference>
<dbReference type="Proteomes" id="UP000007752">
    <property type="component" value="Chromosome 11"/>
</dbReference>
<dbReference type="Proteomes" id="UP000059680">
    <property type="component" value="Chromosome 11"/>
</dbReference>
<dbReference type="GO" id="GO:0005794">
    <property type="term" value="C:Golgi apparatus"/>
    <property type="evidence" value="ECO:0000318"/>
    <property type="project" value="GO_Central"/>
</dbReference>
<dbReference type="GO" id="GO:0000139">
    <property type="term" value="C:Golgi membrane"/>
    <property type="evidence" value="ECO:0000250"/>
    <property type="project" value="UniProtKB"/>
</dbReference>
<dbReference type="GO" id="GO:0016413">
    <property type="term" value="F:O-acetyltransferase activity"/>
    <property type="evidence" value="ECO:0000318"/>
    <property type="project" value="GO_Central"/>
</dbReference>
<dbReference type="GO" id="GO:1990538">
    <property type="term" value="F:xylan O-acetyltransferase activity"/>
    <property type="evidence" value="ECO:0000314"/>
    <property type="project" value="UniProtKB"/>
</dbReference>
<dbReference type="GO" id="GO:0006952">
    <property type="term" value="P:defense response"/>
    <property type="evidence" value="ECO:0007669"/>
    <property type="project" value="UniProtKB-KW"/>
</dbReference>
<dbReference type="GO" id="GO:1990937">
    <property type="term" value="P:xylan acetylation"/>
    <property type="evidence" value="ECO:0000314"/>
    <property type="project" value="UniProtKB"/>
</dbReference>
<dbReference type="InterPro" id="IPR029962">
    <property type="entry name" value="TBL"/>
</dbReference>
<dbReference type="InterPro" id="IPR026057">
    <property type="entry name" value="TBL_C"/>
</dbReference>
<dbReference type="InterPro" id="IPR025846">
    <property type="entry name" value="TBL_N"/>
</dbReference>
<dbReference type="PANTHER" id="PTHR32285">
    <property type="entry name" value="PROTEIN TRICHOME BIREFRINGENCE-LIKE 9-RELATED"/>
    <property type="match status" value="1"/>
</dbReference>
<dbReference type="PANTHER" id="PTHR32285:SF197">
    <property type="entry name" value="XYLAN O-ACETYLTRANSFERASE 12"/>
    <property type="match status" value="1"/>
</dbReference>
<dbReference type="Pfam" id="PF13839">
    <property type="entry name" value="PC-Esterase"/>
    <property type="match status" value="1"/>
</dbReference>
<dbReference type="Pfam" id="PF14416">
    <property type="entry name" value="PMR5N"/>
    <property type="match status" value="1"/>
</dbReference>
<comment type="function">
    <text evidence="2 5 6">Xylan acetyltransferase required for 2-O- and 3-O-monoacetylation of xylosyl residues in xylan (PubMed:27864442, PubMed:29569182). Catalyzes the 2-O-acetylation of xylan, followed by nonenzymatic acetyl migration to the O-3 position, resulting in products that are monoacetylated at both O-2 and O-3 positions (By similarity).</text>
</comment>
<comment type="biophysicochemical properties">
    <kinetics>
        <KM evidence="6">1.18 mM for xylohexaose</KM>
        <Vmax evidence="6">51.6 pmol/min/mg enzyme with xylohexaose as substrate</Vmax>
    </kinetics>
</comment>
<comment type="subcellular location">
    <subcellularLocation>
        <location evidence="1">Golgi apparatus membrane</location>
        <topology evidence="3">Single-pass type II membrane protein</topology>
    </subcellularLocation>
</comment>
<comment type="disruption phenotype">
    <text evidence="5">Stunted growth and reduced plant height (PubMed:27864442). The double mutants tbl1 and tbl2 exhibit increased susceptibility to the bacterial pathogen Xanthomonas oryzae pv oryzae (Xoo) (PubMed:27864442).</text>
</comment>
<comment type="similarity">
    <text evidence="9">Belongs to the PC-esterase family. TBL subfamily.</text>
</comment>
<feature type="chain" id="PRO_0000454035" description="Xylan O-acetyltransferase 12">
    <location>
        <begin position="1"/>
        <end position="503"/>
    </location>
</feature>
<feature type="topological domain" description="Cytoplasmic" evidence="9">
    <location>
        <begin position="1"/>
        <end position="54"/>
    </location>
</feature>
<feature type="transmembrane region" description="Helical; Signal-anchor for type II membrane protein" evidence="3">
    <location>
        <begin position="55"/>
        <end position="77"/>
    </location>
</feature>
<feature type="topological domain" description="Lumenal" evidence="9">
    <location>
        <begin position="78"/>
        <end position="503"/>
    </location>
</feature>
<feature type="short sequence motif" description="GDS motif" evidence="10">
    <location>
        <begin position="227"/>
        <end position="229"/>
    </location>
</feature>
<feature type="short sequence motif" description="DXXH motif" evidence="10">
    <location>
        <begin position="479"/>
        <end position="482"/>
    </location>
</feature>
<feature type="active site" description="Nucleophile" evidence="2">
    <location>
        <position position="229"/>
    </location>
</feature>
<feature type="active site" description="Proton donor" evidence="2">
    <location>
        <position position="479"/>
    </location>
</feature>
<feature type="active site" description="Proton acceptor" evidence="2">
    <location>
        <position position="482"/>
    </location>
</feature>
<feature type="glycosylation site" description="N-linked (GlcNAc...) asparagine" evidence="4">
    <location>
        <position position="154"/>
    </location>
</feature>
<feature type="glycosylation site" description="N-linked (GlcNAc...) asparagine" evidence="4">
    <location>
        <position position="164"/>
    </location>
</feature>
<feature type="glycosylation site" description="N-linked (GlcNAc...) asparagine" evidence="4">
    <location>
        <position position="190"/>
    </location>
</feature>
<feature type="glycosylation site" description="N-linked (GlcNAc...) asparagine" evidence="4">
    <location>
        <position position="210"/>
    </location>
</feature>
<feature type="glycosylation site" description="N-linked (GlcNAc...) asparagine" evidence="4">
    <location>
        <position position="256"/>
    </location>
</feature>
<feature type="glycosylation site" description="N-linked (GlcNAc...) asparagine" evidence="4">
    <location>
        <position position="268"/>
    </location>
</feature>
<feature type="glycosylation site" description="N-linked (GlcNAc...) asparagine" evidence="4">
    <location>
        <position position="373"/>
    </location>
</feature>
<feature type="glycosylation site" description="N-linked (GlcNAc...) asparagine" evidence="4">
    <location>
        <position position="402"/>
    </location>
</feature>
<feature type="glycosylation site" description="N-linked (GlcNAc...) asparagine" evidence="4">
    <location>
        <position position="443"/>
    </location>
</feature>
<feature type="disulfide bond" evidence="2">
    <location>
        <begin position="153"/>
        <end position="204"/>
    </location>
</feature>
<feature type="disulfide bond" evidence="2">
    <location>
        <begin position="175"/>
        <end position="240"/>
    </location>
</feature>
<feature type="disulfide bond" evidence="2">
    <location>
        <begin position="184"/>
        <end position="484"/>
    </location>
</feature>
<feature type="disulfide bond" evidence="2">
    <location>
        <begin position="400"/>
        <end position="480"/>
    </location>
</feature>
<accession>Q2RBL8</accession>
<accession>B9G8Z5</accession>
<organism>
    <name type="scientific">Oryza sativa subsp. japonica</name>
    <name type="common">Rice</name>
    <dbReference type="NCBI Taxonomy" id="39947"/>
    <lineage>
        <taxon>Eukaryota</taxon>
        <taxon>Viridiplantae</taxon>
        <taxon>Streptophyta</taxon>
        <taxon>Embryophyta</taxon>
        <taxon>Tracheophyta</taxon>
        <taxon>Spermatophyta</taxon>
        <taxon>Magnoliopsida</taxon>
        <taxon>Liliopsida</taxon>
        <taxon>Poales</taxon>
        <taxon>Poaceae</taxon>
        <taxon>BOP clade</taxon>
        <taxon>Oryzoideae</taxon>
        <taxon>Oryzeae</taxon>
        <taxon>Oryzinae</taxon>
        <taxon>Oryza</taxon>
        <taxon>Oryza sativa</taxon>
    </lineage>
</organism>
<reference key="1">
    <citation type="journal article" date="2018" name="Planta">
        <title>Biochemical characterization of rice xylan O-acetyltransferases.</title>
        <authorList>
            <person name="Zhong R."/>
            <person name="Cui D."/>
            <person name="Dasher R.L."/>
            <person name="Ye Z.H."/>
        </authorList>
    </citation>
    <scope>NUCLEOTIDE SEQUENCE [MRNA]</scope>
    <scope>FUNCTION</scope>
    <scope>CATALYTIC ACTIVITY</scope>
    <scope>BIOPHYSICOCHEMICAL PROPERTIES</scope>
</reference>
<reference key="2">
    <citation type="journal article" date="2005" name="BMC Biol.">
        <title>The sequence of rice chromosomes 11 and 12, rich in disease resistance genes and recent gene duplications.</title>
        <authorList>
            <consortium name="The rice chromosomes 11 and 12 sequencing consortia"/>
        </authorList>
    </citation>
    <scope>NUCLEOTIDE SEQUENCE [LARGE SCALE GENOMIC DNA]</scope>
    <source>
        <strain>cv. Nipponbare</strain>
    </source>
</reference>
<reference key="3">
    <citation type="journal article" date="2005" name="Nature">
        <title>The map-based sequence of the rice genome.</title>
        <authorList>
            <consortium name="International rice genome sequencing project (IRGSP)"/>
        </authorList>
    </citation>
    <scope>NUCLEOTIDE SEQUENCE [LARGE SCALE GENOMIC DNA]</scope>
    <source>
        <strain>cv. Nipponbare</strain>
    </source>
</reference>
<reference key="4">
    <citation type="journal article" date="2008" name="Nucleic Acids Res.">
        <title>The rice annotation project database (RAP-DB): 2008 update.</title>
        <authorList>
            <consortium name="The rice annotation project (RAP)"/>
        </authorList>
    </citation>
    <scope>GENOME REANNOTATION</scope>
    <source>
        <strain>cv. Nipponbare</strain>
    </source>
</reference>
<reference key="5">
    <citation type="journal article" date="2013" name="Rice">
        <title>Improvement of the Oryza sativa Nipponbare reference genome using next generation sequence and optical map data.</title>
        <authorList>
            <person name="Kawahara Y."/>
            <person name="de la Bastide M."/>
            <person name="Hamilton J.P."/>
            <person name="Kanamori H."/>
            <person name="McCombie W.R."/>
            <person name="Ouyang S."/>
            <person name="Schwartz D.C."/>
            <person name="Tanaka T."/>
            <person name="Wu J."/>
            <person name="Zhou S."/>
            <person name="Childs K.L."/>
            <person name="Davidson R.M."/>
            <person name="Lin H."/>
            <person name="Quesada-Ocampo L."/>
            <person name="Vaillancourt B."/>
            <person name="Sakai H."/>
            <person name="Lee S.S."/>
            <person name="Kim J."/>
            <person name="Numa H."/>
            <person name="Itoh T."/>
            <person name="Buell C.R."/>
            <person name="Matsumoto T."/>
        </authorList>
    </citation>
    <scope>GENOME REANNOTATION</scope>
    <source>
        <strain>cv. Nipponbare</strain>
    </source>
</reference>
<reference key="6">
    <citation type="journal article" date="2005" name="PLoS Biol.">
        <title>The genomes of Oryza sativa: a history of duplications.</title>
        <authorList>
            <person name="Yu J."/>
            <person name="Wang J."/>
            <person name="Lin W."/>
            <person name="Li S."/>
            <person name="Li H."/>
            <person name="Zhou J."/>
            <person name="Ni P."/>
            <person name="Dong W."/>
            <person name="Hu S."/>
            <person name="Zeng C."/>
            <person name="Zhang J."/>
            <person name="Zhang Y."/>
            <person name="Li R."/>
            <person name="Xu Z."/>
            <person name="Li S."/>
            <person name="Li X."/>
            <person name="Zheng H."/>
            <person name="Cong L."/>
            <person name="Lin L."/>
            <person name="Yin J."/>
            <person name="Geng J."/>
            <person name="Li G."/>
            <person name="Shi J."/>
            <person name="Liu J."/>
            <person name="Lv H."/>
            <person name="Li J."/>
            <person name="Wang J."/>
            <person name="Deng Y."/>
            <person name="Ran L."/>
            <person name="Shi X."/>
            <person name="Wang X."/>
            <person name="Wu Q."/>
            <person name="Li C."/>
            <person name="Ren X."/>
            <person name="Wang J."/>
            <person name="Wang X."/>
            <person name="Li D."/>
            <person name="Liu D."/>
            <person name="Zhang X."/>
            <person name="Ji Z."/>
            <person name="Zhao W."/>
            <person name="Sun Y."/>
            <person name="Zhang Z."/>
            <person name="Bao J."/>
            <person name="Han Y."/>
            <person name="Dong L."/>
            <person name="Ji J."/>
            <person name="Chen P."/>
            <person name="Wu S."/>
            <person name="Liu J."/>
            <person name="Xiao Y."/>
            <person name="Bu D."/>
            <person name="Tan J."/>
            <person name="Yang L."/>
            <person name="Ye C."/>
            <person name="Zhang J."/>
            <person name="Xu J."/>
            <person name="Zhou Y."/>
            <person name="Yu Y."/>
            <person name="Zhang B."/>
            <person name="Zhuang S."/>
            <person name="Wei H."/>
            <person name="Liu B."/>
            <person name="Lei M."/>
            <person name="Yu H."/>
            <person name="Li Y."/>
            <person name="Xu H."/>
            <person name="Wei S."/>
            <person name="He X."/>
            <person name="Fang L."/>
            <person name="Zhang Z."/>
            <person name="Zhang Y."/>
            <person name="Huang X."/>
            <person name="Su Z."/>
            <person name="Tong W."/>
            <person name="Li J."/>
            <person name="Tong Z."/>
            <person name="Li S."/>
            <person name="Ye J."/>
            <person name="Wang L."/>
            <person name="Fang L."/>
            <person name="Lei T."/>
            <person name="Chen C.-S."/>
            <person name="Chen H.-C."/>
            <person name="Xu Z."/>
            <person name="Li H."/>
            <person name="Huang H."/>
            <person name="Zhang F."/>
            <person name="Xu H."/>
            <person name="Li N."/>
            <person name="Zhao C."/>
            <person name="Li S."/>
            <person name="Dong L."/>
            <person name="Huang Y."/>
            <person name="Li L."/>
            <person name="Xi Y."/>
            <person name="Qi Q."/>
            <person name="Li W."/>
            <person name="Zhang B."/>
            <person name="Hu W."/>
            <person name="Zhang Y."/>
            <person name="Tian X."/>
            <person name="Jiao Y."/>
            <person name="Liang X."/>
            <person name="Jin J."/>
            <person name="Gao L."/>
            <person name="Zheng W."/>
            <person name="Hao B."/>
            <person name="Liu S.-M."/>
            <person name="Wang W."/>
            <person name="Yuan L."/>
            <person name="Cao M."/>
            <person name="McDermott J."/>
            <person name="Samudrala R."/>
            <person name="Wang J."/>
            <person name="Wong G.K.-S."/>
            <person name="Yang H."/>
        </authorList>
    </citation>
    <scope>NUCLEOTIDE SEQUENCE [LARGE SCALE GENOMIC DNA]</scope>
    <source>
        <strain>cv. Nipponbare</strain>
    </source>
</reference>
<reference key="7">
    <citation type="journal article" date="2003" name="Science">
        <title>Collection, mapping, and annotation of over 28,000 cDNA clones from japonica rice.</title>
        <authorList>
            <consortium name="The rice full-length cDNA consortium"/>
        </authorList>
    </citation>
    <scope>NUCLEOTIDE SEQUENCE [LARGE SCALE MRNA]</scope>
    <source>
        <strain>cv. Nipponbare</strain>
    </source>
</reference>
<reference key="8">
    <citation type="journal article" date="2017" name="Plant Physiol.">
        <title>Two trichome birefringence-like proteins mediate xylan acetylation, which is essential for leaf blight resistance in rice.</title>
        <authorList>
            <person name="Gao Y."/>
            <person name="He C."/>
            <person name="Zhang D."/>
            <person name="Liu X."/>
            <person name="Xu Z."/>
            <person name="Tian Y."/>
            <person name="Liu X.H."/>
            <person name="Zang S."/>
            <person name="Pauly M."/>
            <person name="Zhou Y."/>
            <person name="Zhang B."/>
        </authorList>
    </citation>
    <scope>FUNCTION</scope>
    <scope>GENE FAMILY</scope>
    <scope>NOMENCLATURE</scope>
    <scope>DISRUPTION PHENOTYPE</scope>
</reference>
<evidence type="ECO:0000250" key="1">
    <source>
        <dbReference type="UniProtKB" id="Q2QYU2"/>
    </source>
</evidence>
<evidence type="ECO:0000250" key="2">
    <source>
        <dbReference type="UniProtKB" id="Q9LY46"/>
    </source>
</evidence>
<evidence type="ECO:0000255" key="3"/>
<evidence type="ECO:0000255" key="4">
    <source>
        <dbReference type="PROSITE-ProRule" id="PRU00498"/>
    </source>
</evidence>
<evidence type="ECO:0000269" key="5">
    <source>
    </source>
</evidence>
<evidence type="ECO:0000269" key="6">
    <source>
    </source>
</evidence>
<evidence type="ECO:0000303" key="7">
    <source>
    </source>
</evidence>
<evidence type="ECO:0000303" key="8">
    <source>
    </source>
</evidence>
<evidence type="ECO:0000305" key="9"/>
<evidence type="ECO:0000305" key="10">
    <source>
    </source>
</evidence>
<evidence type="ECO:0000312" key="11">
    <source>
        <dbReference type="EMBL" id="ABA91093.1"/>
    </source>
</evidence>
<evidence type="ECO:0000312" key="12">
    <source>
        <dbReference type="EMBL" id="BAT12325.1"/>
    </source>
</evidence>
<evidence type="ECO:0000312" key="13">
    <source>
        <dbReference type="EMBL" id="EEE51501.1"/>
    </source>
</evidence>
<proteinExistence type="evidence at protein level"/>
<gene>
    <name evidence="8" type="primary">XOAT12</name>
    <name evidence="7" type="synonym">TBL2</name>
    <name evidence="12" type="ordered locus">Os11g0107000</name>
    <name evidence="11" type="ordered locus">LOC_Os11g01570</name>
    <name evidence="13" type="ORF">OsJ_32659</name>
</gene>
<protein>
    <recommendedName>
        <fullName evidence="8">Xylan O-acetyltransferase 12</fullName>
        <ecNumber evidence="6">2.3.1.-</ecNumber>
    </recommendedName>
    <alternativeName>
        <fullName evidence="7">Protein trichome birefringence-like 2</fullName>
        <shortName evidence="7">OsTBL2</shortName>
    </alternativeName>
</protein>
<sequence length="503" mass="57664">MWSALFSHLREVHKRSGVKEEKLIMKSPAAAGEAAGCHKPQATATNKMTVLQSPLGLRTILTSLVAFFIVVSSVSLLFDRSQDAQAQLAVAQHQHQEVQLKQKPASAAVGEQKSVFVDQSSLRSQEAQVQWTSELQDVATDSGDGGVDGEEECNWSLGRWVYDNSSRPLYSGLKCSFIFDEVACDKYGRNDTKYQHWRWQPHGCNLPRFNATKFLEKLRNKRLVFVGDSVNRNQWVSMVCMVEHFIPDGRKMRVYNGSLISFKAFEYNATIDFYWSPLLLESNSDNPIIHRVEYRIIRADRIEKHANVWKDADFIVFNSYLWWRKQRDGMTMKVMYGSFEDGDAKLDEVEMVDGYEIALKKLTEYLGANINKNKTRIFFAGSSPAHSWASNWGGDDNNKCLNETEPIQIEDYRSATTDYGMMDKAKEIFGTLEPKGIHVQILNITQLSEYRKDAHPTIFRRQYVPLTKEQIANPSIYADCTHWCLPGVPDVWNEFLYAYLMHK</sequence>
<name>XOATC_ORYSJ</name>